<protein>
    <recommendedName>
        <fullName>Type II secretion system protein K</fullName>
        <shortName>T2SS protein K</shortName>
    </recommendedName>
    <alternativeName>
        <fullName>General secretion pathway protein K</fullName>
    </alternativeName>
</protein>
<reference key="1">
    <citation type="journal article" date="1993" name="J. Bacteriol.">
        <title>Isolation and analysis of eight exe genes and their involvement in extracellular protein secretion and outer membrane assembly in Aeromonas hydrophila.</title>
        <authorList>
            <person name="Howard S.P."/>
            <person name="Critch J."/>
            <person name="Bedi A."/>
        </authorList>
    </citation>
    <scope>NUCLEOTIDE SEQUENCE [GENOMIC DNA]</scope>
    <source>
        <strain>Ah65</strain>
    </source>
</reference>
<evidence type="ECO:0000250" key="1">
    <source>
        <dbReference type="UniProtKB" id="Q00518"/>
    </source>
</evidence>
<evidence type="ECO:0000255" key="2"/>
<evidence type="ECO:0000305" key="3"/>
<proteinExistence type="inferred from homology"/>
<dbReference type="EMBL" id="X66504">
    <property type="protein sequence ID" value="CAA47132.1"/>
    <property type="molecule type" value="Genomic_DNA"/>
</dbReference>
<dbReference type="PIR" id="D49905">
    <property type="entry name" value="D49905"/>
</dbReference>
<dbReference type="SMR" id="P31760"/>
<dbReference type="eggNOG" id="COG3156">
    <property type="taxonomic scope" value="Bacteria"/>
</dbReference>
<dbReference type="GO" id="GO:0005886">
    <property type="term" value="C:plasma membrane"/>
    <property type="evidence" value="ECO:0007669"/>
    <property type="project" value="UniProtKB-SubCell"/>
</dbReference>
<dbReference type="GO" id="GO:0009306">
    <property type="term" value="P:protein secretion"/>
    <property type="evidence" value="ECO:0007669"/>
    <property type="project" value="InterPro"/>
</dbReference>
<dbReference type="Gene3D" id="1.10.40.60">
    <property type="entry name" value="EpsJ-like"/>
    <property type="match status" value="2"/>
</dbReference>
<dbReference type="Gene3D" id="3.30.1300.30">
    <property type="entry name" value="GSPII I/J protein-like"/>
    <property type="match status" value="1"/>
</dbReference>
<dbReference type="InterPro" id="IPR005628">
    <property type="entry name" value="GspK"/>
</dbReference>
<dbReference type="InterPro" id="IPR038072">
    <property type="entry name" value="GspK_central_sf"/>
</dbReference>
<dbReference type="InterPro" id="IPR045584">
    <property type="entry name" value="Pilin-like"/>
</dbReference>
<dbReference type="InterPro" id="IPR049031">
    <property type="entry name" value="T2SSK_SAM-like_1st"/>
</dbReference>
<dbReference type="InterPro" id="IPR049179">
    <property type="entry name" value="T2SSK_SAM-like_2nd"/>
</dbReference>
<dbReference type="NCBIfam" id="NF037980">
    <property type="entry name" value="T2SS_GspK"/>
    <property type="match status" value="1"/>
</dbReference>
<dbReference type="PANTHER" id="PTHR38831">
    <property type="entry name" value="TYPE II SECRETION SYSTEM PROTEIN K"/>
    <property type="match status" value="1"/>
</dbReference>
<dbReference type="PANTHER" id="PTHR38831:SF1">
    <property type="entry name" value="TYPE II SECRETION SYSTEM PROTEIN K-RELATED"/>
    <property type="match status" value="1"/>
</dbReference>
<dbReference type="Pfam" id="PF03934">
    <property type="entry name" value="T2SSK"/>
    <property type="match status" value="1"/>
</dbReference>
<dbReference type="Pfam" id="PF21687">
    <property type="entry name" value="T2SSK_1st"/>
    <property type="match status" value="1"/>
</dbReference>
<dbReference type="PIRSF" id="PIRSF002786">
    <property type="entry name" value="XcpX"/>
    <property type="match status" value="1"/>
</dbReference>
<dbReference type="SUPFAM" id="SSF158544">
    <property type="entry name" value="GspK insert domain-like"/>
    <property type="match status" value="2"/>
</dbReference>
<dbReference type="SUPFAM" id="SSF54523">
    <property type="entry name" value="Pili subunits"/>
    <property type="match status" value="1"/>
</dbReference>
<comment type="function">
    <text evidence="1">Component of the type II secretion system required for the energy-dependent secretion of extracellular factors such as proteases and toxins from the periplasm. Plays a role in pseudopilus assembly and seems to control its length. Interacts with the pseudopilus tip complex that is critical for the recognition and binding of secretion substrates.</text>
</comment>
<comment type="subunit">
    <text evidence="1">Type II secretion is composed of four main components: the outer membrane complex, the inner membrane complex, the cytoplasmic secretion ATPase and the periplasm-spanning pseudopilus. Interacts with core component ExeG.</text>
</comment>
<comment type="subcellular location">
    <subcellularLocation>
        <location evidence="1">Cell inner membrane</location>
    </subcellularLocation>
</comment>
<comment type="PTM">
    <text evidence="1">Cleaved by prepilin peptidase.</text>
</comment>
<comment type="similarity">
    <text evidence="3">Belongs to the GSP K family.</text>
</comment>
<feature type="propeptide" id="PRO_0000449553" description="Leader sequence" evidence="1">
    <location>
        <begin position="1"/>
        <end position="9"/>
    </location>
</feature>
<feature type="chain" id="PRO_0000449554" description="Type II secretion system protein K">
    <location>
        <begin position="10"/>
        <end position="331"/>
    </location>
</feature>
<feature type="transmembrane region" description="Helical" evidence="2">
    <location>
        <begin position="8"/>
        <end position="27"/>
    </location>
</feature>
<feature type="topological domain" description="Periplasmic" evidence="2">
    <location>
        <begin position="28"/>
        <end position="331"/>
    </location>
</feature>
<accession>P31760</accession>
<keyword id="KW-0997">Cell inner membrane</keyword>
<keyword id="KW-1003">Cell membrane</keyword>
<keyword id="KW-0472">Membrane</keyword>
<keyword id="KW-0653">Protein transport</keyword>
<keyword id="KW-0812">Transmembrane</keyword>
<keyword id="KW-1133">Transmembrane helix</keyword>
<keyword id="KW-0813">Transport</keyword>
<gene>
    <name type="primary">exeK</name>
</gene>
<organism>
    <name type="scientific">Aeromonas hydrophila</name>
    <dbReference type="NCBI Taxonomy" id="644"/>
    <lineage>
        <taxon>Bacteria</taxon>
        <taxon>Pseudomonadati</taxon>
        <taxon>Pseudomonadota</taxon>
        <taxon>Gammaproteobacteria</taxon>
        <taxon>Aeromonadales</taxon>
        <taxon>Aeromonadaceae</taxon>
        <taxon>Aeromonas</taxon>
    </lineage>
</organism>
<name>GSPK_AERHY</name>
<sequence length="331" mass="36693">MPSCRRQGGMALLVVLLILSVMVIIASNMSGRLQLELRRTGNLTAGKQAWWYAMSAEALVSKVLVQDFKDDPNVVNLGQNWARQDAVFPVDDGKLTGRVRDLQSCFNLNSLSVPLKDGISGDDLEKQPYPVKAFRALLKQLEVEDYEAVQLTDAIRDWTDKDTALVSSYGAEDAYYEGLTPPYLTANQWMLSTDELRAVRGVSARLYARLAPYVCALPSDKLLVNINTIKPEQAALLVALYLDKVGLDDAKRVLTSRPQKGWKEKKAMTDQMPAPLSTIPGLDAVLDVKSSYFEARLIAEVGDTRARLESVFVRGKDNKLVMLRRLNGGAE</sequence>